<dbReference type="EC" id="1.7.1.13" evidence="1"/>
<dbReference type="EMBL" id="CP000526">
    <property type="protein sequence ID" value="ABM51913.1"/>
    <property type="molecule type" value="Genomic_DNA"/>
</dbReference>
<dbReference type="RefSeq" id="WP_004189061.1">
    <property type="nucleotide sequence ID" value="NC_008785.1"/>
</dbReference>
<dbReference type="SMR" id="A1V760"/>
<dbReference type="GeneID" id="92977957"/>
<dbReference type="KEGG" id="bmv:BMASAVP1_A2767"/>
<dbReference type="HOGENOM" id="CLU_054738_0_0_4"/>
<dbReference type="UniPathway" id="UPA00392"/>
<dbReference type="GO" id="GO:0005737">
    <property type="term" value="C:cytoplasm"/>
    <property type="evidence" value="ECO:0007669"/>
    <property type="project" value="UniProtKB-SubCell"/>
</dbReference>
<dbReference type="GO" id="GO:0033739">
    <property type="term" value="F:preQ1 synthase activity"/>
    <property type="evidence" value="ECO:0007669"/>
    <property type="project" value="UniProtKB-UniRule"/>
</dbReference>
<dbReference type="GO" id="GO:0008616">
    <property type="term" value="P:queuosine biosynthetic process"/>
    <property type="evidence" value="ECO:0007669"/>
    <property type="project" value="UniProtKB-UniRule"/>
</dbReference>
<dbReference type="GO" id="GO:0006400">
    <property type="term" value="P:tRNA modification"/>
    <property type="evidence" value="ECO:0007669"/>
    <property type="project" value="UniProtKB-UniRule"/>
</dbReference>
<dbReference type="Gene3D" id="3.30.1130.10">
    <property type="match status" value="2"/>
</dbReference>
<dbReference type="HAMAP" id="MF_00817">
    <property type="entry name" value="QueF_type2"/>
    <property type="match status" value="1"/>
</dbReference>
<dbReference type="InterPro" id="IPR043133">
    <property type="entry name" value="GTP-CH-I_C/QueF"/>
</dbReference>
<dbReference type="InterPro" id="IPR050084">
    <property type="entry name" value="NADPH_dep_7-cyano-7-deazaG_red"/>
</dbReference>
<dbReference type="InterPro" id="IPR029500">
    <property type="entry name" value="QueF"/>
</dbReference>
<dbReference type="InterPro" id="IPR029139">
    <property type="entry name" value="QueF_N"/>
</dbReference>
<dbReference type="InterPro" id="IPR016428">
    <property type="entry name" value="QueF_type2"/>
</dbReference>
<dbReference type="NCBIfam" id="TIGR03138">
    <property type="entry name" value="QueF"/>
    <property type="match status" value="1"/>
</dbReference>
<dbReference type="PANTHER" id="PTHR34354">
    <property type="entry name" value="NADPH-DEPENDENT 7-CYANO-7-DEAZAGUANINE REDUCTASE"/>
    <property type="match status" value="1"/>
</dbReference>
<dbReference type="PANTHER" id="PTHR34354:SF1">
    <property type="entry name" value="NADPH-DEPENDENT 7-CYANO-7-DEAZAGUANINE REDUCTASE"/>
    <property type="match status" value="1"/>
</dbReference>
<dbReference type="Pfam" id="PF14489">
    <property type="entry name" value="QueF"/>
    <property type="match status" value="1"/>
</dbReference>
<dbReference type="Pfam" id="PF14819">
    <property type="entry name" value="QueF_N"/>
    <property type="match status" value="1"/>
</dbReference>
<dbReference type="PIRSF" id="PIRSF004750">
    <property type="entry name" value="Nitrile_oxidored_YqcD_prd"/>
    <property type="match status" value="1"/>
</dbReference>
<dbReference type="SUPFAM" id="SSF55620">
    <property type="entry name" value="Tetrahydrobiopterin biosynthesis enzymes-like"/>
    <property type="match status" value="1"/>
</dbReference>
<reference key="1">
    <citation type="journal article" date="2010" name="Genome Biol. Evol.">
        <title>Continuing evolution of Burkholderia mallei through genome reduction and large-scale rearrangements.</title>
        <authorList>
            <person name="Losada L."/>
            <person name="Ronning C.M."/>
            <person name="DeShazer D."/>
            <person name="Woods D."/>
            <person name="Fedorova N."/>
            <person name="Kim H.S."/>
            <person name="Shabalina S.A."/>
            <person name="Pearson T.R."/>
            <person name="Brinkac L."/>
            <person name="Tan P."/>
            <person name="Nandi T."/>
            <person name="Crabtree J."/>
            <person name="Badger J."/>
            <person name="Beckstrom-Sternberg S."/>
            <person name="Saqib M."/>
            <person name="Schutzer S.E."/>
            <person name="Keim P."/>
            <person name="Nierman W.C."/>
        </authorList>
    </citation>
    <scope>NUCLEOTIDE SEQUENCE [LARGE SCALE GENOMIC DNA]</scope>
    <source>
        <strain>SAVP1</strain>
    </source>
</reference>
<proteinExistence type="inferred from homology"/>
<name>QUEF_BURMS</name>
<organism>
    <name type="scientific">Burkholderia mallei (strain SAVP1)</name>
    <dbReference type="NCBI Taxonomy" id="320388"/>
    <lineage>
        <taxon>Bacteria</taxon>
        <taxon>Pseudomonadati</taxon>
        <taxon>Pseudomonadota</taxon>
        <taxon>Betaproteobacteria</taxon>
        <taxon>Burkholderiales</taxon>
        <taxon>Burkholderiaceae</taxon>
        <taxon>Burkholderia</taxon>
        <taxon>pseudomallei group</taxon>
    </lineage>
</organism>
<accession>A1V760</accession>
<keyword id="KW-0963">Cytoplasm</keyword>
<keyword id="KW-0521">NADP</keyword>
<keyword id="KW-0560">Oxidoreductase</keyword>
<keyword id="KW-0671">Queuosine biosynthesis</keyword>
<protein>
    <recommendedName>
        <fullName evidence="1">NADPH-dependent 7-cyano-7-deazaguanine reductase</fullName>
        <ecNumber evidence="1">1.7.1.13</ecNumber>
    </recommendedName>
    <alternativeName>
        <fullName evidence="1">7-cyano-7-carbaguanine reductase</fullName>
    </alternativeName>
    <alternativeName>
        <fullName evidence="1">NADPH-dependent nitrile oxidoreductase</fullName>
    </alternativeName>
    <alternativeName>
        <fullName evidence="1">PreQ(0) reductase</fullName>
    </alternativeName>
</protein>
<gene>
    <name evidence="1" type="primary">queF</name>
    <name type="ordered locus">BMASAVP1_A2767</name>
</gene>
<feature type="chain" id="PRO_1000062332" description="NADPH-dependent 7-cyano-7-deazaguanine reductase">
    <location>
        <begin position="1"/>
        <end position="274"/>
    </location>
</feature>
<feature type="active site" description="Thioimide intermediate" evidence="1">
    <location>
        <position position="181"/>
    </location>
</feature>
<feature type="active site" description="Proton donor" evidence="1">
    <location>
        <position position="188"/>
    </location>
</feature>
<feature type="binding site" evidence="1">
    <location>
        <begin position="80"/>
        <end position="82"/>
    </location>
    <ligand>
        <name>substrate</name>
    </ligand>
</feature>
<feature type="binding site" evidence="1">
    <location>
        <begin position="82"/>
        <end position="83"/>
    </location>
    <ligand>
        <name>NADPH</name>
        <dbReference type="ChEBI" id="CHEBI:57783"/>
    </ligand>
</feature>
<feature type="binding site" evidence="1">
    <location>
        <begin position="220"/>
        <end position="221"/>
    </location>
    <ligand>
        <name>substrate</name>
    </ligand>
</feature>
<feature type="binding site" evidence="1">
    <location>
        <begin position="249"/>
        <end position="250"/>
    </location>
    <ligand>
        <name>NADPH</name>
        <dbReference type="ChEBI" id="CHEBI:57783"/>
    </ligand>
</feature>
<sequence>MNPEHSPLGKATVYANQYDASLLFPIPRAGAREQIGIGAPLPFFGTDIWNAYELSWLNARGKPQIAIATFYVPAESPNIVESKSFKLYLGSFAQTAFESADAVRDALKRDVSAACGASVTVRLATPAEFRKLQMDELDGLSLDRLDLDAHVYETDPSFLTASHDEAPVEETLVTDLLKSNCPVTGQPDWGSVQIHYVGAPIDHAGLLRYIISFRNHTGFHEQCVERIFVDILRACQPVKLAVYARYTRRGGLDINPFRTNYNQPMPDNARTARQ</sequence>
<evidence type="ECO:0000255" key="1">
    <source>
        <dbReference type="HAMAP-Rule" id="MF_00817"/>
    </source>
</evidence>
<comment type="function">
    <text evidence="1">Catalyzes the NADPH-dependent reduction of 7-cyano-7-deazaguanine (preQ0) to 7-aminomethyl-7-deazaguanine (preQ1).</text>
</comment>
<comment type="catalytic activity">
    <reaction evidence="1">
        <text>7-aminomethyl-7-carbaguanine + 2 NADP(+) = 7-cyano-7-deazaguanine + 2 NADPH + 3 H(+)</text>
        <dbReference type="Rhea" id="RHEA:13409"/>
        <dbReference type="ChEBI" id="CHEBI:15378"/>
        <dbReference type="ChEBI" id="CHEBI:45075"/>
        <dbReference type="ChEBI" id="CHEBI:57783"/>
        <dbReference type="ChEBI" id="CHEBI:58349"/>
        <dbReference type="ChEBI" id="CHEBI:58703"/>
        <dbReference type="EC" id="1.7.1.13"/>
    </reaction>
</comment>
<comment type="pathway">
    <text evidence="1">tRNA modification; tRNA-queuosine biosynthesis.</text>
</comment>
<comment type="subunit">
    <text evidence="1">Homodimer.</text>
</comment>
<comment type="subcellular location">
    <subcellularLocation>
        <location evidence="1">Cytoplasm</location>
    </subcellularLocation>
</comment>
<comment type="similarity">
    <text evidence="1">Belongs to the GTP cyclohydrolase I family. QueF type 2 subfamily.</text>
</comment>